<organism evidence="14">
    <name type="scientific">Thermotoga maritima (strain ATCC 43589 / DSM 3109 / JCM 10099 / NBRC 100826 / MSB8)</name>
    <dbReference type="NCBI Taxonomy" id="243274"/>
    <lineage>
        <taxon>Bacteria</taxon>
        <taxon>Thermotogati</taxon>
        <taxon>Thermotogota</taxon>
        <taxon>Thermotogae</taxon>
        <taxon>Thermotogales</taxon>
        <taxon>Thermotogaceae</taxon>
        <taxon>Thermotoga</taxon>
    </lineage>
</organism>
<sequence length="552" mass="63657">MEIFGKTFREGRFVLKEKNFTVEFAVEKIHLGWKISGRVKGSPGRLEVLRTKAPEKVLVNNWQSWGPCRVVDAFSFKPPEIDPNWRYTASVVPDVLERNLQSDYFVAEEGKVYGFLSSKIAHPFFAVEDGELVAYLEYFDVEFDDFVPLEPLVVLEDPNTPLLLEKYAELVGMENNARVPKHTPTGWCSWYHYFLDLTWEETLKNLKLAKNFPFEVFQIDDAYEKDIGDWLVTRGDFPSVEEMAKVIAENGFIPGIWTAPFSVSETSDVFNEHPDWVVKENGEPKMAYRNWNKKIYALDLSKDEVLNWLFDLFSSLRKMGYRYFKIDFLFAGAVPGERKKNITPIQAFRKGIETIRKAVGEDSFILGCGSPLLPAVGCVDGMRIGPDTAPFWGEHIEDNGAPAARWALRNAITRYFMHDRFWLNDPDCLILREEKTDLTQKEKELYSYTCGVLDNMIIESDDLSLVRDHGKKVLKETLELLGGRPRVQNIMSEDLRYEIVSSGTLSGNVKIVVDLNSREYHLEKEGKSSLKKRVVKREDGRNFYFYEEGERE</sequence>
<dbReference type="EC" id="3.2.1.22" evidence="1 2 3 4 5 6"/>
<dbReference type="EMBL" id="AJ001072">
    <property type="protein sequence ID" value="CAA04514.1"/>
    <property type="molecule type" value="Genomic_DNA"/>
</dbReference>
<dbReference type="EMBL" id="AE000512">
    <property type="protein sequence ID" value="AAD36267.1"/>
    <property type="molecule type" value="Genomic_DNA"/>
</dbReference>
<dbReference type="EMBL" id="CP004077">
    <property type="protein sequence ID" value="AGL50123.1"/>
    <property type="molecule type" value="Genomic_DNA"/>
</dbReference>
<dbReference type="PIR" id="E72283">
    <property type="entry name" value="E72283"/>
</dbReference>
<dbReference type="RefSeq" id="NP_228997.1">
    <property type="nucleotide sequence ID" value="NC_000853.1"/>
</dbReference>
<dbReference type="RefSeq" id="WP_004080136.1">
    <property type="nucleotide sequence ID" value="NC_000853.1"/>
</dbReference>
<dbReference type="PDB" id="1ZY9">
    <property type="method" value="X-ray"/>
    <property type="resolution" value="2.34 A"/>
    <property type="chains" value="A=1-552"/>
</dbReference>
<dbReference type="PDB" id="5M0X">
    <property type="method" value="X-ray"/>
    <property type="resolution" value="1.80 A"/>
    <property type="chains" value="A=1-552"/>
</dbReference>
<dbReference type="PDB" id="5M12">
    <property type="method" value="X-ray"/>
    <property type="resolution" value="1.53 A"/>
    <property type="chains" value="A=1-552"/>
</dbReference>
<dbReference type="PDB" id="5M16">
    <property type="method" value="X-ray"/>
    <property type="resolution" value="1.62 A"/>
    <property type="chains" value="A=1-552"/>
</dbReference>
<dbReference type="PDB" id="5M1I">
    <property type="method" value="X-ray"/>
    <property type="resolution" value="1.55 A"/>
    <property type="chains" value="A=1-552"/>
</dbReference>
<dbReference type="PDB" id="6GTA">
    <property type="method" value="X-ray"/>
    <property type="resolution" value="2.20 A"/>
    <property type="chains" value="A=1-552"/>
</dbReference>
<dbReference type="PDB" id="6GVD">
    <property type="method" value="X-ray"/>
    <property type="resolution" value="1.22 A"/>
    <property type="chains" value="A=1-552"/>
</dbReference>
<dbReference type="PDB" id="6GWF">
    <property type="method" value="X-ray"/>
    <property type="resolution" value="1.72 A"/>
    <property type="chains" value="A=1-552"/>
</dbReference>
<dbReference type="PDB" id="6GWG">
    <property type="method" value="X-ray"/>
    <property type="resolution" value="1.77 A"/>
    <property type="chains" value="A=1-552"/>
</dbReference>
<dbReference type="PDB" id="6GX8">
    <property type="method" value="X-ray"/>
    <property type="resolution" value="1.42 A"/>
    <property type="chains" value="A=1-552"/>
</dbReference>
<dbReference type="PDBsum" id="1ZY9"/>
<dbReference type="PDBsum" id="5M0X"/>
<dbReference type="PDBsum" id="5M12"/>
<dbReference type="PDBsum" id="5M16"/>
<dbReference type="PDBsum" id="5M1I"/>
<dbReference type="PDBsum" id="6GTA"/>
<dbReference type="PDBsum" id="6GVD"/>
<dbReference type="PDBsum" id="6GWF"/>
<dbReference type="PDBsum" id="6GWG"/>
<dbReference type="PDBsum" id="6GX8"/>
<dbReference type="SMR" id="G4FEF4"/>
<dbReference type="STRING" id="243274.TM_1192"/>
<dbReference type="ChEMBL" id="CHEMBL3308963"/>
<dbReference type="CAZy" id="GH36">
    <property type="family name" value="Glycoside Hydrolase Family 36"/>
</dbReference>
<dbReference type="PaxDb" id="243274-THEMA_08370"/>
<dbReference type="DNASU" id="898292"/>
<dbReference type="EnsemblBacteria" id="AAD36267">
    <property type="protein sequence ID" value="AAD36267"/>
    <property type="gene ID" value="TM_1192"/>
</dbReference>
<dbReference type="KEGG" id="tma:TM1192"/>
<dbReference type="KEGG" id="tmi:THEMA_08370"/>
<dbReference type="KEGG" id="tmm:Tmari_1199"/>
<dbReference type="KEGG" id="tmw:THMA_1218"/>
<dbReference type="PATRIC" id="fig|243274.17.peg.1197"/>
<dbReference type="eggNOG" id="COG3345">
    <property type="taxonomic scope" value="Bacteria"/>
</dbReference>
<dbReference type="InParanoid" id="G4FEF4"/>
<dbReference type="OrthoDB" id="9758822at2"/>
<dbReference type="BRENDA" id="3.2.1.22">
    <property type="organism ID" value="6331"/>
</dbReference>
<dbReference type="EvolutionaryTrace" id="G4FEF4"/>
<dbReference type="Proteomes" id="UP000008183">
    <property type="component" value="Chromosome"/>
</dbReference>
<dbReference type="GO" id="GO:0004557">
    <property type="term" value="F:alpha-galactosidase activity"/>
    <property type="evidence" value="ECO:0000314"/>
    <property type="project" value="UniProtKB"/>
</dbReference>
<dbReference type="GO" id="GO:0030246">
    <property type="term" value="F:carbohydrate binding"/>
    <property type="evidence" value="ECO:0007669"/>
    <property type="project" value="InterPro"/>
</dbReference>
<dbReference type="GO" id="GO:0042803">
    <property type="term" value="F:protein homodimerization activity"/>
    <property type="evidence" value="ECO:0000314"/>
    <property type="project" value="UniProtKB"/>
</dbReference>
<dbReference type="GO" id="GO:0005975">
    <property type="term" value="P:carbohydrate metabolic process"/>
    <property type="evidence" value="ECO:0007669"/>
    <property type="project" value="InterPro"/>
</dbReference>
<dbReference type="GO" id="GO:0016139">
    <property type="term" value="P:glycoside catabolic process"/>
    <property type="evidence" value="ECO:0000314"/>
    <property type="project" value="UniProtKB"/>
</dbReference>
<dbReference type="CDD" id="cd14790">
    <property type="entry name" value="GH_D"/>
    <property type="match status" value="1"/>
</dbReference>
<dbReference type="FunFam" id="3.20.20.70:FF:000338">
    <property type="entry name" value="Alpha-galactosidase"/>
    <property type="match status" value="1"/>
</dbReference>
<dbReference type="Gene3D" id="2.60.40.2760">
    <property type="match status" value="1"/>
</dbReference>
<dbReference type="Gene3D" id="3.20.20.70">
    <property type="entry name" value="Aldolase class I"/>
    <property type="match status" value="1"/>
</dbReference>
<dbReference type="InterPro" id="IPR013785">
    <property type="entry name" value="Aldolase_TIM"/>
</dbReference>
<dbReference type="InterPro" id="IPR050985">
    <property type="entry name" value="Alpha-glycosidase_related"/>
</dbReference>
<dbReference type="InterPro" id="IPR011013">
    <property type="entry name" value="Gal_mutarotase_sf_dom"/>
</dbReference>
<dbReference type="InterPro" id="IPR055092">
    <property type="entry name" value="GalA_N"/>
</dbReference>
<dbReference type="InterPro" id="IPR017853">
    <property type="entry name" value="Glycoside_hydrolase_SF"/>
</dbReference>
<dbReference type="PANTHER" id="PTHR43053:SF3">
    <property type="entry name" value="ALPHA-GALACTOSIDASE C-RELATED"/>
    <property type="match status" value="1"/>
</dbReference>
<dbReference type="PANTHER" id="PTHR43053">
    <property type="entry name" value="GLYCOSIDASE FAMILY 31"/>
    <property type="match status" value="1"/>
</dbReference>
<dbReference type="Pfam" id="PF22676">
    <property type="entry name" value="GalA_N"/>
    <property type="match status" value="1"/>
</dbReference>
<dbReference type="Pfam" id="PF02065">
    <property type="entry name" value="Melibiase"/>
    <property type="match status" value="1"/>
</dbReference>
<dbReference type="SUPFAM" id="SSF51445">
    <property type="entry name" value="(Trans)glycosidases"/>
    <property type="match status" value="1"/>
</dbReference>
<dbReference type="SUPFAM" id="SSF74650">
    <property type="entry name" value="Galactose mutarotase-like"/>
    <property type="match status" value="1"/>
</dbReference>
<evidence type="ECO:0000269" key="1">
    <source>
    </source>
</evidence>
<evidence type="ECO:0000269" key="2">
    <source>
    </source>
</evidence>
<evidence type="ECO:0000269" key="3">
    <source>
    </source>
</evidence>
<evidence type="ECO:0000269" key="4">
    <source>
    </source>
</evidence>
<evidence type="ECO:0000269" key="5">
    <source>
    </source>
</evidence>
<evidence type="ECO:0000269" key="6">
    <source>
    </source>
</evidence>
<evidence type="ECO:0000303" key="7">
    <source>
    </source>
</evidence>
<evidence type="ECO:0000303" key="8">
    <source>
    </source>
</evidence>
<evidence type="ECO:0000303" key="9">
    <source>
    </source>
</evidence>
<evidence type="ECO:0000303" key="10">
    <source>
    </source>
</evidence>
<evidence type="ECO:0000303" key="11">
    <source>
    </source>
</evidence>
<evidence type="ECO:0000305" key="12"/>
<evidence type="ECO:0000312" key="13">
    <source>
        <dbReference type="EMBL" id="AAD36267.1"/>
    </source>
</evidence>
<evidence type="ECO:0000312" key="14">
    <source>
        <dbReference type="EMBL" id="AGL50123.1"/>
    </source>
</evidence>
<evidence type="ECO:0000312" key="15">
    <source>
        <dbReference type="EMBL" id="CAA04514.1"/>
    </source>
</evidence>
<evidence type="ECO:0000312" key="16">
    <source>
        <dbReference type="Proteomes" id="UP000008183"/>
    </source>
</evidence>
<evidence type="ECO:0007744" key="17">
    <source>
        <dbReference type="PDB" id="1ZY9"/>
    </source>
</evidence>
<evidence type="ECO:0007744" key="18">
    <source>
        <dbReference type="PDB" id="5M0X"/>
    </source>
</evidence>
<evidence type="ECO:0007744" key="19">
    <source>
        <dbReference type="PDB" id="5M12"/>
    </source>
</evidence>
<evidence type="ECO:0007744" key="20">
    <source>
        <dbReference type="PDB" id="5M16"/>
    </source>
</evidence>
<evidence type="ECO:0007744" key="21">
    <source>
        <dbReference type="PDB" id="5M1I"/>
    </source>
</evidence>
<evidence type="ECO:0007829" key="22">
    <source>
        <dbReference type="PDB" id="1ZY9"/>
    </source>
</evidence>
<evidence type="ECO:0007829" key="23">
    <source>
        <dbReference type="PDB" id="6GVD"/>
    </source>
</evidence>
<reference evidence="15" key="1">
    <citation type="journal article" date="1998" name="Syst. Appl. Microbiol.">
        <title>Properties of an alpha-galactosidase, and structure of its gene galA, within an alpha- and beta-galactoside utilization gene cluster of the hyperthermophilic bacterium Thermotoga maritima.</title>
        <authorList>
            <person name="Liebl W."/>
            <person name="Wagner B."/>
            <person name="Schellhase J."/>
        </authorList>
    </citation>
    <scope>NUCLEOTIDE SEQUENCE [GENOMIC DNA]</scope>
    <scope>PROTEIN SEQUENCE OF 1-36</scope>
    <scope>FUNCTION</scope>
    <scope>CATALYTIC ACTIVITY</scope>
    <scope>BIOPHYSICOCHEMICAL PROPERTIES</scope>
    <scope>SUBSTRATE SPECIFICITY</scope>
    <scope>SUBUNIT</scope>
    <scope>OPERON STRUCTURE</scope>
    <source>
        <strain evidence="15">ATCC 43589 / DSM 3109 / JCM 10099 / NBRC 100826 / MSB8</strain>
    </source>
</reference>
<reference evidence="13 16" key="2">
    <citation type="journal article" date="1999" name="Nature">
        <title>Evidence for lateral gene transfer between Archaea and Bacteria from genome sequence of Thermotoga maritima.</title>
        <authorList>
            <person name="Nelson K.E."/>
            <person name="Clayton R.A."/>
            <person name="Gill S.R."/>
            <person name="Gwinn M.L."/>
            <person name="Dodson R.J."/>
            <person name="Haft D.H."/>
            <person name="Hickey E.K."/>
            <person name="Peterson J.D."/>
            <person name="Nelson W.C."/>
            <person name="Ketchum K.A."/>
            <person name="McDonald L.A."/>
            <person name="Utterback T.R."/>
            <person name="Malek J.A."/>
            <person name="Linher K.D."/>
            <person name="Garrett M.M."/>
            <person name="Stewart A.M."/>
            <person name="Cotton M.D."/>
            <person name="Pratt M.S."/>
            <person name="Phillips C.A."/>
            <person name="Richardson D.L."/>
            <person name="Heidelberg J.F."/>
            <person name="Sutton G.G."/>
            <person name="Fleischmann R.D."/>
            <person name="Eisen J.A."/>
            <person name="White O."/>
            <person name="Salzberg S.L."/>
            <person name="Smith H.O."/>
            <person name="Venter J.C."/>
            <person name="Fraser C.M."/>
        </authorList>
    </citation>
    <scope>NUCLEOTIDE SEQUENCE [LARGE SCALE GENOMIC DNA]</scope>
    <source>
        <strain evidence="13 16">ATCC 43589 / DSM 3109 / JCM 10099 / NBRC 100826 / MSB8</strain>
    </source>
</reference>
<reference evidence="14" key="3">
    <citation type="journal article" date="2013" name="PLoS Genet.">
        <title>The genome organization of Thermotoga maritima reflects its lifestyle.</title>
        <authorList>
            <person name="Latif H."/>
            <person name="Lerman J.A."/>
            <person name="Portnoy V.A."/>
            <person name="Tarasova Y."/>
            <person name="Nagarajan H."/>
            <person name="Schrimpe-Rutledge A.C."/>
            <person name="Smith R.D."/>
            <person name="Adkins J.N."/>
            <person name="Lee D.H."/>
            <person name="Qiu Y."/>
            <person name="Zengler K."/>
        </authorList>
    </citation>
    <scope>NUCLEOTIDE SEQUENCE [LARGE SCALE GENOMIC DNA]</scope>
    <source>
        <strain evidence="14">ATCC 43589 / DSM 3109 / JCM 10099 / NBRC 100826 / MSB8</strain>
    </source>
</reference>
<reference key="4">
    <citation type="journal article" date="2007" name="Biochemistry">
        <title>Biochemical analysis of Thermotoga maritima GH36 alpha-galactosidase (TmGalA) confirms the mechanistic commonality of clan GH-D glycoside hydrolases.</title>
        <authorList>
            <person name="Comfort D.A."/>
            <person name="Bobrov K.S."/>
            <person name="Ivanen D.R."/>
            <person name="Shabalin K.A."/>
            <person name="Harris J.M."/>
            <person name="Kulminskaya A.A."/>
            <person name="Brumer H."/>
            <person name="Kelly R.M."/>
        </authorList>
    </citation>
    <scope>CATALYTIC ACTIVITY</scope>
    <scope>REACTION MECHANISM</scope>
    <scope>ACTIVE SITE</scope>
    <scope>MUTAGENESIS OF ASP-220; ASP-327 AND ASP-387</scope>
    <source>
        <strain evidence="7">ATCC 43589 / DSM 3109 / JCM 10099 / NBRC 100826 / MSB8</strain>
    </source>
</reference>
<reference key="5">
    <citation type="journal article" date="2013" name="Biochemistry (Mosc.)">
        <title>Improvement of the efficiency of transglycosylation catalyzed by alpha-galactosidase from Thermotoga maritima by protein engineering.</title>
        <authorList>
            <person name="Bobrov K.S."/>
            <person name="Borisova A.S."/>
            <person name="Eneyskaya E.V."/>
            <person name="Ivanen D.R."/>
            <person name="Shabalin K.A."/>
            <person name="Kulminskaya A.A."/>
            <person name="Rychkov G.N."/>
        </authorList>
    </citation>
    <scope>CATALYTIC ACTIVITY</scope>
    <scope>BIOPHYSICOCHEMICAL PROPERTIES</scope>
    <scope>MUTAGENESIS OF PHE-328; GLY-385 AND PRO-402</scope>
    <scope>PROTEIN ENGINEERING</scope>
    <source>
        <strain evidence="8">ATCC 43589 / DSM 3109 / JCM 10099 / NBRC 100826 / MSB8</strain>
    </source>
</reference>
<reference key="6">
    <citation type="journal article" date="2015" name="Carbohydr. Res.">
        <title>The method of integrated kinetics and its applicability to the exo-glycosidase-catalyzed hydrolysis of p-nitrophenyl glycosides.</title>
        <authorList>
            <person name="Borisova A.S."/>
            <person name="Reddy S.K."/>
            <person name="Ivanen D.R."/>
            <person name="Bobrov K.S."/>
            <person name="Eneyskaya E.V."/>
            <person name="Rychkov G.N."/>
            <person name="Sandgren M."/>
            <person name="Staalbrand H."/>
            <person name="Sinnott M.L."/>
            <person name="Kulminskaya A.A."/>
            <person name="Shabalin K.A."/>
        </authorList>
    </citation>
    <scope>CATALYTIC ACTIVITY</scope>
    <scope>ACTIVITY REGULATION</scope>
    <source>
        <strain evidence="10">ATCC 43589 / DSM 3109 / JCM 10099 / NBRC 100826 / MSB8</strain>
    </source>
</reference>
<reference key="7">
    <citation type="journal article" date="2015" name="Carbohydr. Res.">
        <title>alpha-Galactobiosyl units: thermodynamics and kinetics of their formation by transglycosylations catalysed by the GH36 alpha-galactosidase from Thermotoga maritima.</title>
        <authorList>
            <person name="Borisova A.S."/>
            <person name="Ivanen D.R."/>
            <person name="Bobrov K.S."/>
            <person name="Eneyskaya E.V."/>
            <person name="Rychkov G.N."/>
            <person name="Sandgren M."/>
            <person name="Kulminskaya A.A."/>
            <person name="Sinnott M.L."/>
            <person name="Shabalin K.A."/>
        </authorList>
    </citation>
    <scope>FUNCTION</scope>
    <scope>CATALYTIC ACTIVITY</scope>
    <scope>BIOPHYSICOCHEMICAL PROPERTIES</scope>
    <source>
        <strain evidence="9">ATCC 43589 / DSM 3109 / JCM 10099 / NBRC 100826 / MSB8</strain>
    </source>
</reference>
<reference evidence="17" key="8">
    <citation type="submission" date="2005-06" db="PDB data bank">
        <title>Crystal structure of alpha-galactosidase (ec 3.2.1.22) (melibiase) (tm1192) from Thermotoga maritima at 2.34 A resolution.</title>
        <authorList>
            <consortium name="Joint Center for Structural Genomics (JCSG)"/>
        </authorList>
    </citation>
    <scope>X-RAY CRYSTALLOGRAPHY (2.34 ANGSTROMS) OF APOENZYME</scope>
</reference>
<reference evidence="18 19 20 21" key="9">
    <citation type="journal article" date="2016" name="Angew. Chem. Int. Ed.">
        <title>Structural snapshots for mechanism-based inactivation of a glycoside hydrolase by cyclopropyl carbasugars.</title>
        <authorList>
            <person name="Adamson C."/>
            <person name="Pengelly R.J."/>
            <person name="Shamsi Kazem Abadi S."/>
            <person name="Chakladar S."/>
            <person name="Draper J."/>
            <person name="Britton R."/>
            <person name="Gloster T.M."/>
            <person name="Bennet A.J."/>
        </authorList>
    </citation>
    <scope>X-RAY CRYSTALLOGRAPHY (1.53 ANGSTROMS) OF SUBSTRATE-FREE ENZYME AND IN COMPLEX WITH INHIBITOR ANALOG AND HYDROLYSIS PRODUCT</scope>
    <scope>CATALYTIC ACTIVITY</scope>
    <scope>ACTIVITY REGULATION</scope>
    <scope>REACTION MECHANISM</scope>
</reference>
<proteinExistence type="evidence at protein level"/>
<accession>G4FEF4</accession>
<accession>O33835</accession>
<keyword id="KW-0002">3D-structure</keyword>
<keyword id="KW-0119">Carbohydrate metabolism</keyword>
<keyword id="KW-0903">Direct protein sequencing</keyword>
<keyword id="KW-0326">Glycosidase</keyword>
<keyword id="KW-0378">Hydrolase</keyword>
<keyword id="KW-1185">Reference proteome</keyword>
<gene>
    <name evidence="11 15" type="primary">galA</name>
    <name evidence="13" type="ordered locus">TM_1192</name>
    <name evidence="14" type="ORF">Tmari_1199</name>
</gene>
<protein>
    <recommendedName>
        <fullName evidence="11 14 15">Alpha-galactosidase</fullName>
        <ecNumber evidence="1 2 3 4 5 6">3.2.1.22</ecNumber>
    </recommendedName>
    <alternativeName>
        <fullName evidence="12">Melibiase</fullName>
    </alternativeName>
</protein>
<feature type="chain" id="PRO_0000439021" description="Alpha-galactosidase">
    <location>
        <begin position="1"/>
        <end position="552"/>
    </location>
</feature>
<feature type="active site" description="Nucleophile" evidence="1">
    <location>
        <position position="327"/>
    </location>
</feature>
<feature type="active site" description="Proton donor/acceptor" evidence="1">
    <location>
        <position position="387"/>
    </location>
</feature>
<feature type="binding site" evidence="5 20">
    <location>
        <position position="65"/>
    </location>
    <ligand>
        <name>substrate</name>
    </ligand>
</feature>
<feature type="binding site" evidence="5 20">
    <location>
        <position position="191"/>
    </location>
    <ligand>
        <name>substrate</name>
    </ligand>
</feature>
<feature type="binding site" evidence="5 20">
    <location>
        <begin position="220"/>
        <end position="221"/>
    </location>
    <ligand>
        <name>substrate</name>
    </ligand>
</feature>
<feature type="binding site" evidence="5 20">
    <location>
        <begin position="325"/>
        <end position="327"/>
    </location>
    <ligand>
        <name>substrate</name>
    </ligand>
</feature>
<feature type="binding site" evidence="5 20">
    <location>
        <position position="368"/>
    </location>
    <ligand>
        <name>substrate</name>
    </ligand>
</feature>
<feature type="binding site" evidence="5 20">
    <location>
        <position position="383"/>
    </location>
    <ligand>
        <name>substrate</name>
    </ligand>
</feature>
<feature type="mutagenesis site" description="Less than 1% of the wild-type enzyme activity with p-nitrophenyl-alpha-D-galactopyranoside as substrate at 80 degrees Celsius." evidence="1">
    <original>D</original>
    <variation>A</variation>
    <location>
        <position position="220"/>
    </location>
</feature>
<feature type="mutagenesis site" description="Reduced activity compared to the wild-type enzyme." evidence="1">
    <original>D</original>
    <variation>G</variation>
    <location>
        <position position="220"/>
    </location>
</feature>
<feature type="mutagenesis site" description="Less than 1% of the wild-type enzyme activity with p-nitrophenyl-alpha-D-galactopyranoside as substrate at 80 degrees Celsius." evidence="1">
    <original>D</original>
    <variation>A</variation>
    <location>
        <position position="327"/>
    </location>
</feature>
<feature type="mutagenesis site" description="Between 200 and 800-fold lower catalytic rate and between 300 and 1700-fold lower catalytic efficiency than the wild-type enzyme with aryl-alpha-galactosides as substrates." evidence="1">
    <original>D</original>
    <variation>G</variation>
    <location>
        <position position="327"/>
    </location>
</feature>
<feature type="mutagenesis site" description="Increased transglycosylating activity at high concentrations of p-nitrophenyl-alpha-D-galactopyranoside substrate, which could be useful in industry and medicine for the synthesis of different p-nitrophenyl-digalactosides. Able to produce 16 times more of a regio-isomer with the (alpha1,2)-bond than wild-type enzyme." evidence="2">
    <original>F</original>
    <variation>A</variation>
    <location>
        <position position="328"/>
    </location>
</feature>
<feature type="mutagenesis site" description="Increased transglycosylating activity at high concentrations of p-nitrophenyl-alpha-D-galactopyranoside substrate, which could be useful in industry and medicine for the synthesis of different p-nitrophenyl-digalactosides." evidence="2">
    <original>G</original>
    <variation>L</variation>
    <location>
        <position position="385"/>
    </location>
</feature>
<feature type="mutagenesis site" description="Less than 1% of the wild-type enzyme activity with p-nitrophenyl-alpha-D-galactopyranoside as substrate at 80 degrees Celsius." evidence="1">
    <original>D</original>
    <variation>A</variation>
    <location>
        <position position="387"/>
    </location>
</feature>
<feature type="mutagenesis site" description="1500-fold lower catalytic rate and 1000-fold lower catalytic efficiency than the wild-type enzyme with p-nitrophenyl-alpha-D-galactopyranoside as substrate." evidence="1">
    <original>D</original>
    <variation>G</variation>
    <location>
        <position position="387"/>
    </location>
</feature>
<feature type="mutagenesis site" description="Increased transglycosylating activity at high concentrations of p-nitrophenyl-alpha-D-galactopyranoside substrate, which could be useful in industry and medicine for the synthesis of different p-nitrophenyl-digalactosides." evidence="2">
    <original>P</original>
    <variation>D</variation>
    <location>
        <position position="402"/>
    </location>
</feature>
<feature type="strand" evidence="22">
    <location>
        <begin position="1"/>
        <end position="3"/>
    </location>
</feature>
<feature type="strand" evidence="23">
    <location>
        <begin position="10"/>
        <end position="16"/>
    </location>
</feature>
<feature type="strand" evidence="23">
    <location>
        <begin position="18"/>
        <end position="29"/>
    </location>
</feature>
<feature type="strand" evidence="23">
    <location>
        <begin position="32"/>
        <end position="41"/>
    </location>
</feature>
<feature type="strand" evidence="23">
    <location>
        <begin position="45"/>
        <end position="52"/>
    </location>
</feature>
<feature type="strand" evidence="23">
    <location>
        <begin position="55"/>
        <end position="60"/>
    </location>
</feature>
<feature type="strand" evidence="23">
    <location>
        <begin position="68"/>
        <end position="75"/>
    </location>
</feature>
<feature type="helix" evidence="22">
    <location>
        <begin position="83"/>
        <end position="85"/>
    </location>
</feature>
<feature type="helix" evidence="23">
    <location>
        <begin position="86"/>
        <end position="89"/>
    </location>
</feature>
<feature type="helix" evidence="23">
    <location>
        <begin position="93"/>
        <end position="96"/>
    </location>
</feature>
<feature type="strand" evidence="23">
    <location>
        <begin position="101"/>
        <end position="108"/>
    </location>
</feature>
<feature type="strand" evidence="23">
    <location>
        <begin position="111"/>
        <end position="116"/>
    </location>
</feature>
<feature type="strand" evidence="23">
    <location>
        <begin position="119"/>
        <end position="128"/>
    </location>
</feature>
<feature type="strand" evidence="23">
    <location>
        <begin position="131"/>
        <end position="137"/>
    </location>
</feature>
<feature type="strand" evidence="23">
    <location>
        <begin position="143"/>
        <end position="148"/>
    </location>
</feature>
<feature type="strand" evidence="23">
    <location>
        <begin position="152"/>
        <end position="156"/>
    </location>
</feature>
<feature type="helix" evidence="23">
    <location>
        <begin position="160"/>
        <end position="175"/>
    </location>
</feature>
<feature type="strand" evidence="23">
    <location>
        <begin position="185"/>
        <end position="189"/>
    </location>
</feature>
<feature type="helix" evidence="23">
    <location>
        <begin position="190"/>
        <end position="193"/>
    </location>
</feature>
<feature type="helix" evidence="23">
    <location>
        <begin position="194"/>
        <end position="196"/>
    </location>
</feature>
<feature type="helix" evidence="23">
    <location>
        <begin position="199"/>
        <end position="208"/>
    </location>
</feature>
<feature type="helix" evidence="23">
    <location>
        <begin position="209"/>
        <end position="211"/>
    </location>
</feature>
<feature type="strand" evidence="23">
    <location>
        <begin position="215"/>
        <end position="219"/>
    </location>
</feature>
<feature type="strand" evidence="23">
    <location>
        <begin position="223"/>
        <end position="226"/>
    </location>
</feature>
<feature type="helix" evidence="23">
    <location>
        <begin position="240"/>
        <end position="249"/>
    </location>
</feature>
<feature type="strand" evidence="23">
    <location>
        <begin position="253"/>
        <end position="258"/>
    </location>
</feature>
<feature type="strand" evidence="23">
    <location>
        <begin position="262"/>
        <end position="264"/>
    </location>
</feature>
<feature type="helix" evidence="23">
    <location>
        <begin position="268"/>
        <end position="272"/>
    </location>
</feature>
<feature type="helix" evidence="23">
    <location>
        <begin position="274"/>
        <end position="276"/>
    </location>
</feature>
<feature type="strand" evidence="23">
    <location>
        <begin position="286"/>
        <end position="290"/>
    </location>
</feature>
<feature type="strand" evidence="23">
    <location>
        <begin position="293"/>
        <end position="298"/>
    </location>
</feature>
<feature type="helix" evidence="23">
    <location>
        <begin position="303"/>
        <end position="319"/>
    </location>
</feature>
<feature type="strand" evidence="23">
    <location>
        <begin position="323"/>
        <end position="326"/>
    </location>
</feature>
<feature type="helix" evidence="23">
    <location>
        <begin position="329"/>
        <end position="333"/>
    </location>
</feature>
<feature type="strand" evidence="23">
    <location>
        <begin position="335"/>
        <end position="337"/>
    </location>
</feature>
<feature type="strand" evidence="23">
    <location>
        <begin position="339"/>
        <end position="341"/>
    </location>
</feature>
<feature type="helix" evidence="23">
    <location>
        <begin position="344"/>
        <end position="359"/>
    </location>
</feature>
<feature type="strand" evidence="23">
    <location>
        <begin position="363"/>
        <end position="367"/>
    </location>
</feature>
<feature type="helix" evidence="23">
    <location>
        <begin position="373"/>
        <end position="375"/>
    </location>
</feature>
<feature type="turn" evidence="23">
    <location>
        <begin position="376"/>
        <end position="378"/>
    </location>
</feature>
<feature type="strand" evidence="23">
    <location>
        <begin position="380"/>
        <end position="383"/>
    </location>
</feature>
<feature type="strand" evidence="23">
    <location>
        <begin position="398"/>
        <end position="401"/>
    </location>
</feature>
<feature type="helix" evidence="23">
    <location>
        <begin position="404"/>
        <end position="413"/>
    </location>
</feature>
<feature type="helix" evidence="23">
    <location>
        <begin position="415"/>
        <end position="417"/>
    </location>
</feature>
<feature type="turn" evidence="23">
    <location>
        <begin position="418"/>
        <end position="420"/>
    </location>
</feature>
<feature type="strand" evidence="23">
    <location>
        <begin position="421"/>
        <end position="425"/>
    </location>
</feature>
<feature type="strand" evidence="23">
    <location>
        <begin position="433"/>
        <end position="435"/>
    </location>
</feature>
<feature type="helix" evidence="23">
    <location>
        <begin position="440"/>
        <end position="452"/>
    </location>
</feature>
<feature type="strand" evidence="23">
    <location>
        <begin position="457"/>
        <end position="459"/>
    </location>
</feature>
<feature type="helix" evidence="23">
    <location>
        <begin position="463"/>
        <end position="465"/>
    </location>
</feature>
<feature type="helix" evidence="23">
    <location>
        <begin position="468"/>
        <end position="478"/>
    </location>
</feature>
<feature type="strand" evidence="23">
    <location>
        <begin position="482"/>
        <end position="487"/>
    </location>
</feature>
<feature type="turn" evidence="23">
    <location>
        <begin position="488"/>
        <end position="491"/>
    </location>
</feature>
<feature type="strand" evidence="23">
    <location>
        <begin position="493"/>
        <end position="504"/>
    </location>
</feature>
<feature type="strand" evidence="23">
    <location>
        <begin position="507"/>
        <end position="514"/>
    </location>
</feature>
<feature type="turn" evidence="23">
    <location>
        <begin position="515"/>
        <end position="518"/>
    </location>
</feature>
<feature type="strand" evidence="23">
    <location>
        <begin position="519"/>
        <end position="524"/>
    </location>
</feature>
<name>AGAL_THEMA</name>
<comment type="function">
    <text evidence="3 6">Hydrolyzes the short-chain alpha-galactosaccharides raffinose, melibiose and stachyose.</text>
</comment>
<comment type="catalytic activity">
    <reaction evidence="1 2 3 4 5 6">
        <text>Hydrolysis of terminal, non-reducing alpha-D-galactose residues in alpha-D-galactosides, including galactose oligosaccharides, galactomannans and galactolipids.</text>
        <dbReference type="EC" id="3.2.1.22"/>
    </reaction>
</comment>
<comment type="activity regulation">
    <text evidence="4 5">Inhibited by hydrolysis product alpha-galactopyranose and to a lesser extent by beta-galactopyranose, its mutarotational product (PubMed:26005928). Inhibited by synthetic cyclopropyl carbasugars (PubMed:27783466).</text>
</comment>
<comment type="biophysicochemical properties">
    <kinetics>
        <KM evidence="6">0.075 mM for p-nitrophenol-alpha-galactoside (at pH 5.0 and 75 degrees Celsius)</KM>
        <KM evidence="6">2.1 mM for raffinose (at pH 5.0 and 75 degrees Celsius)</KM>
        <KM evidence="2">0.11 mM for p-nitrophenyl-alpha-D-galactopyranoside (at pH 5.0 and 37 degrees Celsius)</KM>
        <KM evidence="3">1.17 mM for melibiose (at pH 5.0 and 37 degrees Celsius)</KM>
        <KM evidence="3">10.04 mM for raffinose (at pH 5.0 and 37 degrees Celsius)</KM>
        <KM evidence="3">2.84 mM for stachyose (at pH 5.0 and 37 degrees Celsius)</KM>
        <Vmax evidence="6">166.0 umol/min/mg enzyme for 4-nitrophenol-alpha-galactoside (at pH 5.0 and 75 degrees Celsius)</Vmax>
        <Vmax evidence="6">103.0 umol/min/mg enzyme for raffinose (at pH 5.0 and 75 degrees Celsius)</Vmax>
        <text evidence="2 3 6">kcat is 176 s(1) for p-nitrophenol-alpha-galactoside (at pH 5.0 and 75 degrees Celsius). kcat is 109 s(1) for raffinose (at pH 5.0 and 75 degrees Celsius) (PubMed:9741105). kcat is 8 s(1) for p-nitrophenyl-alpha-D-galactopyranoside (at pH 5.0 and 37 degrees Celsius) (PubMed:24237145). kcat is 2.33 s(1) for melibiose (at pH 5.0 and 37 degrees Celsius). kcat is 5.0 s(1) for raffinose (at pH 5.0 and 37 degrees Celsius). kcat is 0.53 s(1) for stachyose (at pH 5.0 and 37 degrees Celsius) (PubMed:25486100).</text>
    </kinetics>
    <phDependence>
        <text evidence="6">Optimum pH is 5.0-5.5 when using synthetic substrate p-nitrophenyl-alpha-D-galactopyranoside.</text>
    </phDependence>
    <temperatureDependence>
        <text evidence="6">Optimum temperature is 90-95 degrees Celsius when using synthetic substrate p-nitrophenyl-alpha-D-galactopyranoside. The half-life of thermoinactivation is 6.5 h at 85 degrees Celsius.</text>
    </temperatureDependence>
</comment>
<comment type="subunit">
    <text evidence="6">Homodimer.</text>
</comment>
<comment type="similarity">
    <text evidence="12">Belongs to the glycosyl hydrolase 36 family.</text>
</comment>